<accession>Q8Y026</accession>
<proteinExistence type="inferred from homology"/>
<feature type="chain" id="PRO_0000179033" description="GTPase Der">
    <location>
        <begin position="1"/>
        <end position="447"/>
    </location>
</feature>
<feature type="domain" description="EngA-type G 1">
    <location>
        <begin position="3"/>
        <end position="167"/>
    </location>
</feature>
<feature type="domain" description="EngA-type G 2">
    <location>
        <begin position="181"/>
        <end position="354"/>
    </location>
</feature>
<feature type="domain" description="KH-like" evidence="1">
    <location>
        <begin position="355"/>
        <end position="439"/>
    </location>
</feature>
<feature type="binding site" evidence="1">
    <location>
        <begin position="9"/>
        <end position="16"/>
    </location>
    <ligand>
        <name>GTP</name>
        <dbReference type="ChEBI" id="CHEBI:37565"/>
        <label>1</label>
    </ligand>
</feature>
<feature type="binding site" evidence="1">
    <location>
        <begin position="56"/>
        <end position="60"/>
    </location>
    <ligand>
        <name>GTP</name>
        <dbReference type="ChEBI" id="CHEBI:37565"/>
        <label>1</label>
    </ligand>
</feature>
<feature type="binding site" evidence="1">
    <location>
        <begin position="119"/>
        <end position="122"/>
    </location>
    <ligand>
        <name>GTP</name>
        <dbReference type="ChEBI" id="CHEBI:37565"/>
        <label>1</label>
    </ligand>
</feature>
<feature type="binding site" evidence="1">
    <location>
        <begin position="187"/>
        <end position="194"/>
    </location>
    <ligand>
        <name>GTP</name>
        <dbReference type="ChEBI" id="CHEBI:37565"/>
        <label>2</label>
    </ligand>
</feature>
<feature type="binding site" evidence="1">
    <location>
        <begin position="234"/>
        <end position="238"/>
    </location>
    <ligand>
        <name>GTP</name>
        <dbReference type="ChEBI" id="CHEBI:37565"/>
        <label>2</label>
    </ligand>
</feature>
<feature type="binding site" evidence="1">
    <location>
        <begin position="299"/>
        <end position="302"/>
    </location>
    <ligand>
        <name>GTP</name>
        <dbReference type="ChEBI" id="CHEBI:37565"/>
        <label>2</label>
    </ligand>
</feature>
<protein>
    <recommendedName>
        <fullName evidence="1">GTPase Der</fullName>
    </recommendedName>
    <alternativeName>
        <fullName evidence="1">GTP-binding protein EngA</fullName>
    </alternativeName>
</protein>
<organism>
    <name type="scientific">Ralstonia nicotianae (strain ATCC BAA-1114 / GMI1000)</name>
    <name type="common">Ralstonia solanacearum</name>
    <dbReference type="NCBI Taxonomy" id="267608"/>
    <lineage>
        <taxon>Bacteria</taxon>
        <taxon>Pseudomonadati</taxon>
        <taxon>Pseudomonadota</taxon>
        <taxon>Betaproteobacteria</taxon>
        <taxon>Burkholderiales</taxon>
        <taxon>Burkholderiaceae</taxon>
        <taxon>Ralstonia</taxon>
        <taxon>Ralstonia solanacearum species complex</taxon>
    </lineage>
</organism>
<gene>
    <name evidence="1" type="primary">der</name>
    <name type="synonym">engA</name>
    <name type="ordered locus">RSc1219</name>
    <name type="ORF">RS02721</name>
</gene>
<dbReference type="EMBL" id="AL646052">
    <property type="protein sequence ID" value="CAD14921.1"/>
    <property type="molecule type" value="Genomic_DNA"/>
</dbReference>
<dbReference type="RefSeq" id="WP_011001169.1">
    <property type="nucleotide sequence ID" value="NC_003295.1"/>
</dbReference>
<dbReference type="SMR" id="Q8Y026"/>
<dbReference type="STRING" id="267608.RSc1219"/>
<dbReference type="EnsemblBacteria" id="CAD14921">
    <property type="protein sequence ID" value="CAD14921"/>
    <property type="gene ID" value="RSc1219"/>
</dbReference>
<dbReference type="KEGG" id="rso:RSc1219"/>
<dbReference type="eggNOG" id="COG1160">
    <property type="taxonomic scope" value="Bacteria"/>
</dbReference>
<dbReference type="HOGENOM" id="CLU_016077_6_2_4"/>
<dbReference type="Proteomes" id="UP000001436">
    <property type="component" value="Chromosome"/>
</dbReference>
<dbReference type="GO" id="GO:0016887">
    <property type="term" value="F:ATP hydrolysis activity"/>
    <property type="evidence" value="ECO:0007669"/>
    <property type="project" value="InterPro"/>
</dbReference>
<dbReference type="GO" id="GO:0005525">
    <property type="term" value="F:GTP binding"/>
    <property type="evidence" value="ECO:0007669"/>
    <property type="project" value="UniProtKB-UniRule"/>
</dbReference>
<dbReference type="GO" id="GO:0043022">
    <property type="term" value="F:ribosome binding"/>
    <property type="evidence" value="ECO:0007669"/>
    <property type="project" value="TreeGrafter"/>
</dbReference>
<dbReference type="GO" id="GO:0042254">
    <property type="term" value="P:ribosome biogenesis"/>
    <property type="evidence" value="ECO:0007669"/>
    <property type="project" value="UniProtKB-KW"/>
</dbReference>
<dbReference type="CDD" id="cd01894">
    <property type="entry name" value="EngA1"/>
    <property type="match status" value="1"/>
</dbReference>
<dbReference type="CDD" id="cd01895">
    <property type="entry name" value="EngA2"/>
    <property type="match status" value="1"/>
</dbReference>
<dbReference type="FunFam" id="3.30.300.20:FF:000004">
    <property type="entry name" value="GTPase Der"/>
    <property type="match status" value="1"/>
</dbReference>
<dbReference type="FunFam" id="3.40.50.300:FF:000040">
    <property type="entry name" value="GTPase Der"/>
    <property type="match status" value="1"/>
</dbReference>
<dbReference type="FunFam" id="3.40.50.300:FF:000057">
    <property type="entry name" value="GTPase Der"/>
    <property type="match status" value="1"/>
</dbReference>
<dbReference type="Gene3D" id="3.30.300.20">
    <property type="match status" value="1"/>
</dbReference>
<dbReference type="Gene3D" id="3.40.50.300">
    <property type="entry name" value="P-loop containing nucleotide triphosphate hydrolases"/>
    <property type="match status" value="2"/>
</dbReference>
<dbReference type="HAMAP" id="MF_00195">
    <property type="entry name" value="GTPase_Der"/>
    <property type="match status" value="1"/>
</dbReference>
<dbReference type="InterPro" id="IPR003593">
    <property type="entry name" value="AAA+_ATPase"/>
</dbReference>
<dbReference type="InterPro" id="IPR031166">
    <property type="entry name" value="G_ENGA"/>
</dbReference>
<dbReference type="InterPro" id="IPR006073">
    <property type="entry name" value="GTP-bd"/>
</dbReference>
<dbReference type="InterPro" id="IPR016484">
    <property type="entry name" value="GTPase_Der"/>
</dbReference>
<dbReference type="InterPro" id="IPR032859">
    <property type="entry name" value="KH_dom-like"/>
</dbReference>
<dbReference type="InterPro" id="IPR015946">
    <property type="entry name" value="KH_dom-like_a/b"/>
</dbReference>
<dbReference type="InterPro" id="IPR027417">
    <property type="entry name" value="P-loop_NTPase"/>
</dbReference>
<dbReference type="InterPro" id="IPR005225">
    <property type="entry name" value="Small_GTP-bd"/>
</dbReference>
<dbReference type="NCBIfam" id="TIGR03594">
    <property type="entry name" value="GTPase_EngA"/>
    <property type="match status" value="1"/>
</dbReference>
<dbReference type="NCBIfam" id="TIGR00231">
    <property type="entry name" value="small_GTP"/>
    <property type="match status" value="2"/>
</dbReference>
<dbReference type="PANTHER" id="PTHR43834">
    <property type="entry name" value="GTPASE DER"/>
    <property type="match status" value="1"/>
</dbReference>
<dbReference type="PANTHER" id="PTHR43834:SF6">
    <property type="entry name" value="GTPASE DER"/>
    <property type="match status" value="1"/>
</dbReference>
<dbReference type="Pfam" id="PF14714">
    <property type="entry name" value="KH_dom-like"/>
    <property type="match status" value="1"/>
</dbReference>
<dbReference type="Pfam" id="PF01926">
    <property type="entry name" value="MMR_HSR1"/>
    <property type="match status" value="2"/>
</dbReference>
<dbReference type="PIRSF" id="PIRSF006485">
    <property type="entry name" value="GTP-binding_EngA"/>
    <property type="match status" value="1"/>
</dbReference>
<dbReference type="PRINTS" id="PR00326">
    <property type="entry name" value="GTP1OBG"/>
</dbReference>
<dbReference type="SMART" id="SM00382">
    <property type="entry name" value="AAA"/>
    <property type="match status" value="2"/>
</dbReference>
<dbReference type="SUPFAM" id="SSF52540">
    <property type="entry name" value="P-loop containing nucleoside triphosphate hydrolases"/>
    <property type="match status" value="2"/>
</dbReference>
<dbReference type="PROSITE" id="PS51712">
    <property type="entry name" value="G_ENGA"/>
    <property type="match status" value="2"/>
</dbReference>
<reference key="1">
    <citation type="journal article" date="2002" name="Nature">
        <title>Genome sequence of the plant pathogen Ralstonia solanacearum.</title>
        <authorList>
            <person name="Salanoubat M."/>
            <person name="Genin S."/>
            <person name="Artiguenave F."/>
            <person name="Gouzy J."/>
            <person name="Mangenot S."/>
            <person name="Arlat M."/>
            <person name="Billault A."/>
            <person name="Brottier P."/>
            <person name="Camus J.-C."/>
            <person name="Cattolico L."/>
            <person name="Chandler M."/>
            <person name="Choisne N."/>
            <person name="Claudel-Renard C."/>
            <person name="Cunnac S."/>
            <person name="Demange N."/>
            <person name="Gaspin C."/>
            <person name="Lavie M."/>
            <person name="Moisan A."/>
            <person name="Robert C."/>
            <person name="Saurin W."/>
            <person name="Schiex T."/>
            <person name="Siguier P."/>
            <person name="Thebault P."/>
            <person name="Whalen M."/>
            <person name="Wincker P."/>
            <person name="Levy M."/>
            <person name="Weissenbach J."/>
            <person name="Boucher C.A."/>
        </authorList>
    </citation>
    <scope>NUCLEOTIDE SEQUENCE [LARGE SCALE GENOMIC DNA]</scope>
    <source>
        <strain>ATCC BAA-1114 / GMI1000</strain>
    </source>
</reference>
<evidence type="ECO:0000255" key="1">
    <source>
        <dbReference type="HAMAP-Rule" id="MF_00195"/>
    </source>
</evidence>
<keyword id="KW-0342">GTP-binding</keyword>
<keyword id="KW-0547">Nucleotide-binding</keyword>
<keyword id="KW-1185">Reference proteome</keyword>
<keyword id="KW-0677">Repeat</keyword>
<keyword id="KW-0690">Ribosome biogenesis</keyword>
<name>DER_RALN1</name>
<comment type="function">
    <text evidence="1">GTPase that plays an essential role in the late steps of ribosome biogenesis.</text>
</comment>
<comment type="subunit">
    <text evidence="1">Associates with the 50S ribosomal subunit.</text>
</comment>
<comment type="similarity">
    <text evidence="1">Belongs to the TRAFAC class TrmE-Era-EngA-EngB-Septin-like GTPase superfamily. EngA (Der) GTPase family.</text>
</comment>
<sequence length="447" mass="49225">MKPVIALVGRPNVGKSTLFNRLTRSRDALVADMPGLTRDRHYGEGRVGERPFIAIDTGGFEPVAKEGIVAEMAKQTRQAVVEADVVIFIVDGRLGLAPQDRVIADYLRKTGRRILLAVNKAEGMKYTAVATDFYELGLGDPRAISSAHGDGVRELVDEALDLAFAERPELAEAAEGHDHGTRIAIVGRPNVGKSTLVNALIGEERVIAFDMPGTTRDAIYVDFERNGKPYTLIDTAGLRKRGKVFEAIEKFSVVKTLQSIADANVVVLLLDAQQDISDQDAHIAGFIVESGRALVIGVNKWDGLDGHARDRIKHDMERKLQFLSFANVHYISAKQRTGIGALMKSVDDAYAAAMVKLPTPKLTRVLQEAVEFQQPRRAGVSRPKLRYAHQGGSNPPIVVIHGNALSNIPETYRRFLEGRFRDAFQLKGTPLRIEFRTNKNPYAQSNE</sequence>